<accession>P48193</accession>
<accession>A2A843</accession>
<accession>Q5DTQ8</accession>
<accession>Q68FF1</accession>
<accession>Q6NVF5</accession>
<keyword id="KW-0009">Actin-binding</keyword>
<keyword id="KW-0025">Alternative splicing</keyword>
<keyword id="KW-0112">Calmodulin-binding</keyword>
<keyword id="KW-0131">Cell cycle</keyword>
<keyword id="KW-0132">Cell division</keyword>
<keyword id="KW-0963">Cytoplasm</keyword>
<keyword id="KW-0206">Cytoskeleton</keyword>
<keyword id="KW-0903">Direct protein sequencing</keyword>
<keyword id="KW-0325">Glycoprotein</keyword>
<keyword id="KW-0498">Mitosis</keyword>
<keyword id="KW-0539">Nucleus</keyword>
<keyword id="KW-0597">Phosphoprotein</keyword>
<keyword id="KW-1185">Reference proteome</keyword>
<keyword id="KW-0813">Transport</keyword>
<organism>
    <name type="scientific">Mus musculus</name>
    <name type="common">Mouse</name>
    <dbReference type="NCBI Taxonomy" id="10090"/>
    <lineage>
        <taxon>Eukaryota</taxon>
        <taxon>Metazoa</taxon>
        <taxon>Chordata</taxon>
        <taxon>Craniata</taxon>
        <taxon>Vertebrata</taxon>
        <taxon>Euteleostomi</taxon>
        <taxon>Mammalia</taxon>
        <taxon>Eutheria</taxon>
        <taxon>Euarchontoglires</taxon>
        <taxon>Glires</taxon>
        <taxon>Rodentia</taxon>
        <taxon>Myomorpha</taxon>
        <taxon>Muroidea</taxon>
        <taxon>Muridae</taxon>
        <taxon>Murinae</taxon>
        <taxon>Mus</taxon>
        <taxon>Mus</taxon>
    </lineage>
</organism>
<comment type="function">
    <text evidence="2">Protein 4.1 is a major structural element of the erythrocyte membrane skeleton. It plays a key role in regulating membrane physical properties of mechanical stability and deformability by stabilizing spectrin-actin interaction. Recruits DLG1 to membranes. Required for dynein-dynactin complex and NUMA1 recruitment at the mitotic cell cortex during anaphase.</text>
</comment>
<comment type="subunit">
    <text evidence="2 5">Binds with a high affinity to glycophorin and with lower affinity to band III protein. Associates with the nuclear mitotic apparatus. Binds calmodulin, CPAP and DLG1. Also found to associate with contractile apparatus and tight junctions. Interacts with NUMA1; this interaction is negatively regulated by CDK1 during metaphase and promotes anaphase-specific localization of NUMA1 in symmetrically dividing cells. Interacts with ATP2B1; regulates small intestinal calcium absorption through regulation of membrane expression of ATP2B1 (PubMed:23460639).</text>
</comment>
<comment type="subcellular location">
    <subcellularLocation>
        <location evidence="2">Nucleus</location>
    </subcellularLocation>
    <subcellularLocation>
        <location evidence="2">Cytoplasm</location>
        <location evidence="2">Cytoskeleton</location>
    </subcellularLocation>
    <subcellularLocation>
        <location evidence="2">Cytoplasm</location>
        <location evidence="2">Cell cortex</location>
    </subcellularLocation>
</comment>
<comment type="alternative products">
    <event type="alternative splicing"/>
    <isoform>
        <id>P48193-1</id>
        <name>1</name>
        <sequence type="displayed"/>
    </isoform>
    <isoform>
        <id>P48193-2</id>
        <name>2</name>
        <sequence type="described" ref="VSP_012874"/>
    </isoform>
    <text>A number of isoforms are produced.</text>
</comment>
<comment type="PTM">
    <text evidence="1">O-glycosylated; contains N-acetylglucosamine side chains in the C-terminal domain.</text>
</comment>
<comment type="PTM">
    <text>Phosphorylated at multiple sites by different protein kinases and each phosphorylation event selectively modulates the protein's functions.</text>
</comment>
<comment type="PTM">
    <text>Phosphorylation on Tyr-654 reduces the ability of 4.1 to promote the assembly of the spectrin/actin/4.1 ternary complex.</text>
</comment>
<comment type="sequence caution" evidence="8">
    <conflict type="erroneous initiation">
        <sequence resource="EMBL-CDS" id="BAD90280"/>
    </conflict>
</comment>
<gene>
    <name evidence="9" type="primary">Epb41</name>
    <name evidence="9" type="synonym">Epb4.1</name>
    <name type="synonym">Kiaa4056</name>
</gene>
<sequence length="858" mass="95911">MTTEKSLAAEAENSQHQQQKEEGEGATNSGQQETQLEEASQAAAAEGSDQGEQKLKASNGDTPTHEDLTKNKERTSESRGLSRLLSSFLKRPKSQVSEEEGREVESEKEKGEGGQKEIELGNSLDEDIILKAPIAAPEPELKTDPSLDLHSLSSIETQPAQEEHREDPDSETKEGEGIEECSGTEVKEDPESRAEREPEASQKPVRRHRNMHCKVSLLDDTVYECVVEKHAKGQDLLKRVCEHLNLLEEDYFGLALWDSATSKTWLDSAKEIKKQVRGVPWNFTFNVKFYPPDPAQLTEDITRYYLCLQLRQDIVAGRLPCSFATLALLGSYTIQSELGDYDPELHGMDYVSDFKLAPNQTKELEEKVMELHKSYRSMTPAQADLEFLENAKKLSMYGVDLHKAKDLEGVDIILGVCSSGLLVYKDKLRINRFPWPKVLKISYKRSSFFIKIRPGEQEHYESTIGFKLPSYRAAKKLWKVCVEHHTFFRLTSTDTIPKSKFLALGSKFRYSGRTQAQTRQASALIDRPAPHFERTASKRASRSLDGAAAAESTDRSPRPTSAPAIAQSQVTEGPGAPIKKTPKEAVKVEEKRGEEPAEPAEPEPTEAWKVEKTHTEVTVPTSNGDQTQKLAGKGEDLIRMRKKKRERLDGENIYIRHSNLMLEDLDKSQEEIKKHHASISELKKNFMESVPEPRPSEWDKRLSTHSPFRTLNINGQVPTGDGPPLVKTQTVTISDTANAVKSEIPTKDVPIVHTETKTITYEAAQTEDSNGDLDPGVLLTAQTITSETTSSTTTTQITKTVKGGISETRIEKRIVITGDADIDHDQVLVQAIKEAKEQHPDMSVTKVVVHQETEISEE</sequence>
<proteinExistence type="evidence at protein level"/>
<reference key="1">
    <citation type="journal article" date="1993" name="J. Biol. Chem.">
        <title>Genomic structure of the locus encoding protein 4.1. Structural basis for complex combinational patterns of tissue-specific alternative RNA splicing.</title>
        <authorList>
            <person name="Huang J.-P."/>
            <person name="Tang C.-J.C."/>
            <person name="Kou G.-H."/>
            <person name="Marchesi V.T."/>
            <person name="Benz E.J. Jr."/>
            <person name="Tang T.K."/>
        </authorList>
    </citation>
    <scope>NUCLEOTIDE SEQUENCE [MRNA] (ISOFORM 1)</scope>
    <scope>ALTERNATIVE SPLICING</scope>
    <source>
        <strain>BALB/cJ</strain>
    </source>
</reference>
<reference key="2">
    <citation type="submission" date="2005-02" db="EMBL/GenBank/DDBJ databases">
        <title>Prediction of the coding sequences of mouse homologues of KIAA gene. The complete nucleotide sequences of mouse KIAA-homologous cDNAs identified by screening of terminal sequences of cDNA clones randomly sampled from size-fractionated libraries.</title>
        <authorList>
            <person name="Okazaki N."/>
            <person name="Kikuno R.F."/>
            <person name="Ohara R."/>
            <person name="Inamoto S."/>
            <person name="Nagase T."/>
            <person name="Ohara O."/>
            <person name="Koga H."/>
        </authorList>
    </citation>
    <scope>NUCLEOTIDE SEQUENCE [LARGE SCALE MRNA] (ISOFORM 2)</scope>
    <source>
        <tissue>Fetal brain</tissue>
    </source>
</reference>
<reference key="3">
    <citation type="journal article" date="2009" name="PLoS Biol.">
        <title>Lineage-specific biology revealed by a finished genome assembly of the mouse.</title>
        <authorList>
            <person name="Church D.M."/>
            <person name="Goodstadt L."/>
            <person name="Hillier L.W."/>
            <person name="Zody M.C."/>
            <person name="Goldstein S."/>
            <person name="She X."/>
            <person name="Bult C.J."/>
            <person name="Agarwala R."/>
            <person name="Cherry J.L."/>
            <person name="DiCuccio M."/>
            <person name="Hlavina W."/>
            <person name="Kapustin Y."/>
            <person name="Meric P."/>
            <person name="Maglott D."/>
            <person name="Birtle Z."/>
            <person name="Marques A.C."/>
            <person name="Graves T."/>
            <person name="Zhou S."/>
            <person name="Teague B."/>
            <person name="Potamousis K."/>
            <person name="Churas C."/>
            <person name="Place M."/>
            <person name="Herschleb J."/>
            <person name="Runnheim R."/>
            <person name="Forrest D."/>
            <person name="Amos-Landgraf J."/>
            <person name="Schwartz D.C."/>
            <person name="Cheng Z."/>
            <person name="Lindblad-Toh K."/>
            <person name="Eichler E.E."/>
            <person name="Ponting C.P."/>
        </authorList>
    </citation>
    <scope>NUCLEOTIDE SEQUENCE [LARGE SCALE GENOMIC DNA]</scope>
    <source>
        <strain>C57BL/6J</strain>
    </source>
</reference>
<reference key="4">
    <citation type="journal article" date="2004" name="Genome Res.">
        <title>The status, quality, and expansion of the NIH full-length cDNA project: the Mammalian Gene Collection (MGC).</title>
        <authorList>
            <consortium name="The MGC Project Team"/>
        </authorList>
    </citation>
    <scope>NUCLEOTIDE SEQUENCE [LARGE SCALE MRNA] (ISOFORMS 1 AND 2)</scope>
    <source>
        <strain>C57BL/6J</strain>
        <tissue>Brain</tissue>
    </source>
</reference>
<reference key="5">
    <citation type="journal article" date="2001" name="Eur. J. Biochem.">
        <title>Properties of the C-terminal domain of 4.1 proteins.</title>
        <authorList>
            <person name="Scott C."/>
            <person name="Phillips G.W."/>
            <person name="Baines A.J."/>
        </authorList>
    </citation>
    <scope>PROTEIN SEQUENCE OF 709-713</scope>
    <scope>IDENTIFICATION BY MASS SPECTROMETRY</scope>
    <scope>CHARACTERIZATION OF CARBOXY-TERMINAL DOMAIN</scope>
</reference>
<reference key="6">
    <citation type="journal article" date="2007" name="J. Immunol.">
        <title>Quantitative time-resolved phosphoproteomic analysis of mast cell signaling.</title>
        <authorList>
            <person name="Cao L."/>
            <person name="Yu K."/>
            <person name="Banh C."/>
            <person name="Nguyen V."/>
            <person name="Ritz A."/>
            <person name="Raphael B.J."/>
            <person name="Kawakami Y."/>
            <person name="Kawakami T."/>
            <person name="Salomon A.R."/>
        </authorList>
    </citation>
    <scope>PHOSPHORYLATION [LARGE SCALE ANALYSIS] AT TYR-223</scope>
    <scope>IDENTIFICATION BY MASS SPECTROMETRY [LARGE SCALE ANALYSIS]</scope>
    <source>
        <tissue>Mast cell</tissue>
    </source>
</reference>
<reference key="7">
    <citation type="journal article" date="2007" name="Proc. Natl. Acad. Sci. U.S.A.">
        <title>Large-scale phosphorylation analysis of mouse liver.</title>
        <authorList>
            <person name="Villen J."/>
            <person name="Beausoleil S.A."/>
            <person name="Gerber S.A."/>
            <person name="Gygi S.P."/>
        </authorList>
    </citation>
    <scope>PHOSPHORYLATION [LARGE SCALE ANALYSIS] AT SER-541 AND SER-543</scope>
    <scope>IDENTIFICATION BY MASS SPECTROMETRY [LARGE SCALE ANALYSIS]</scope>
    <source>
        <tissue>Liver</tissue>
    </source>
</reference>
<reference key="8">
    <citation type="journal article" date="2009" name="Immunity">
        <title>The phagosomal proteome in interferon-gamma-activated macrophages.</title>
        <authorList>
            <person name="Trost M."/>
            <person name="English L."/>
            <person name="Lemieux S."/>
            <person name="Courcelles M."/>
            <person name="Desjardins M."/>
            <person name="Thibault P."/>
        </authorList>
    </citation>
    <scope>PHOSPHORYLATION [LARGE SCALE ANALYSIS] AT SER-543</scope>
    <scope>IDENTIFICATION BY MASS SPECTROMETRY [LARGE SCALE ANALYSIS]</scope>
</reference>
<reference key="9">
    <citation type="journal article" date="2010" name="Cell">
        <title>A tissue-specific atlas of mouse protein phosphorylation and expression.</title>
        <authorList>
            <person name="Huttlin E.L."/>
            <person name="Jedrychowski M.P."/>
            <person name="Elias J.E."/>
            <person name="Goswami T."/>
            <person name="Rad R."/>
            <person name="Beausoleil S.A."/>
            <person name="Villen J."/>
            <person name="Haas W."/>
            <person name="Sowa M.E."/>
            <person name="Gygi S.P."/>
        </authorList>
    </citation>
    <scope>PHOSPHORYLATION [LARGE SCALE ANALYSIS] AT SER-123; SER-541; SER-543; SER-556; SER-658 AND SER-668</scope>
    <scope>IDENTIFICATION BY MASS SPECTROMETRY [LARGE SCALE ANALYSIS]</scope>
    <source>
        <tissue>Brain</tissue>
        <tissue>Brown adipose tissue</tissue>
        <tissue>Heart</tissue>
        <tissue>Kidney</tissue>
        <tissue>Liver</tissue>
        <tissue>Lung</tissue>
        <tissue>Pancreas</tissue>
        <tissue>Spleen</tissue>
        <tissue>Testis</tissue>
    </source>
</reference>
<reference key="10">
    <citation type="journal article" date="2013" name="J. Biol. Chem.">
        <title>Impaired intestinal calcium absorption in protein 4.1R-deficient mice due to altered expression of plasma membrane calcium ATPase 1b (PMCA1b).</title>
        <authorList>
            <person name="Liu C."/>
            <person name="Weng H."/>
            <person name="Chen L."/>
            <person name="Yang S."/>
            <person name="Wang H."/>
            <person name="Debnath G."/>
            <person name="Guo X."/>
            <person name="Wu L."/>
            <person name="Mohandas N."/>
            <person name="An X."/>
        </authorList>
    </citation>
    <scope>INTERACTION WITH ATP2B1</scope>
</reference>
<protein>
    <recommendedName>
        <fullName>Protein 4.1</fullName>
        <shortName>P4.1</shortName>
    </recommendedName>
    <alternativeName>
        <fullName>4.1R</fullName>
    </alternativeName>
    <alternativeName>
        <fullName>Band 4.1</fullName>
    </alternativeName>
    <alternativeName>
        <fullName evidence="9">Erythrocyte membrane protein band 4.1</fullName>
    </alternativeName>
</protein>
<name>EPB41_MOUSE</name>
<feature type="chain" id="PRO_0000219391" description="Protein 4.1">
    <location>
        <begin position="1"/>
        <end position="858"/>
    </location>
</feature>
<feature type="domain" description="FERM" evidence="3">
    <location>
        <begin position="211"/>
        <end position="492"/>
    </location>
</feature>
<feature type="region of interest" description="Disordered" evidence="4">
    <location>
        <begin position="1"/>
        <end position="125"/>
    </location>
</feature>
<feature type="region of interest" description="Disordered" evidence="4">
    <location>
        <begin position="155"/>
        <end position="208"/>
    </location>
</feature>
<feature type="region of interest" description="Hydrophilic">
    <location>
        <begin position="495"/>
        <end position="608"/>
    </location>
</feature>
<feature type="region of interest" description="Disordered" evidence="4">
    <location>
        <begin position="518"/>
        <end position="636"/>
    </location>
</feature>
<feature type="region of interest" description="Spectrin--actin-binding">
    <location>
        <begin position="609"/>
        <end position="707"/>
    </location>
</feature>
<feature type="region of interest" description="C-terminal (CTD)">
    <location>
        <begin position="710"/>
        <end position="858"/>
    </location>
</feature>
<feature type="compositionally biased region" description="Low complexity" evidence="4">
    <location>
        <begin position="31"/>
        <end position="50"/>
    </location>
</feature>
<feature type="compositionally biased region" description="Basic and acidic residues" evidence="4">
    <location>
        <begin position="63"/>
        <end position="77"/>
    </location>
</feature>
<feature type="compositionally biased region" description="Low complexity" evidence="4">
    <location>
        <begin position="78"/>
        <end position="89"/>
    </location>
</feature>
<feature type="compositionally biased region" description="Basic and acidic residues" evidence="4">
    <location>
        <begin position="103"/>
        <end position="119"/>
    </location>
</feature>
<feature type="compositionally biased region" description="Basic and acidic residues" evidence="4">
    <location>
        <begin position="161"/>
        <end position="176"/>
    </location>
</feature>
<feature type="compositionally biased region" description="Basic and acidic residues" evidence="4">
    <location>
        <begin position="185"/>
        <end position="200"/>
    </location>
</feature>
<feature type="compositionally biased region" description="Basic and acidic residues" evidence="4">
    <location>
        <begin position="581"/>
        <end position="595"/>
    </location>
</feature>
<feature type="compositionally biased region" description="Basic and acidic residues" evidence="4">
    <location>
        <begin position="606"/>
        <end position="615"/>
    </location>
</feature>
<feature type="compositionally biased region" description="Polar residues" evidence="4">
    <location>
        <begin position="616"/>
        <end position="629"/>
    </location>
</feature>
<feature type="modified residue" description="Phosphoserine" evidence="2">
    <location>
        <position position="14"/>
    </location>
</feature>
<feature type="modified residue" description="Phosphothreonine" evidence="2">
    <location>
        <position position="62"/>
    </location>
</feature>
<feature type="modified residue" description="Phosphoserine" evidence="2">
    <location>
        <position position="86"/>
    </location>
</feature>
<feature type="modified residue" description="Phosphoserine" evidence="2">
    <location>
        <position position="87"/>
    </location>
</feature>
<feature type="modified residue" description="Phosphoserine" evidence="2">
    <location>
        <position position="97"/>
    </location>
</feature>
<feature type="modified residue" description="Phosphoserine" evidence="2">
    <location>
        <position position="106"/>
    </location>
</feature>
<feature type="modified residue" description="Phosphoserine" evidence="13">
    <location>
        <position position="123"/>
    </location>
</feature>
<feature type="modified residue" description="Phosphoserine" evidence="2">
    <location>
        <position position="151"/>
    </location>
</feature>
<feature type="modified residue" description="Phosphoserine" evidence="2">
    <location>
        <position position="153"/>
    </location>
</feature>
<feature type="modified residue" description="Phosphoserine" evidence="2">
    <location>
        <position position="154"/>
    </location>
</feature>
<feature type="modified residue" description="Phosphoserine" evidence="2">
    <location>
        <position position="192"/>
    </location>
</feature>
<feature type="modified residue" description="Phosphotyrosine" evidence="11">
    <location>
        <position position="223"/>
    </location>
</feature>
<feature type="modified residue" description="Phosphothreonine" evidence="2">
    <location>
        <position position="379"/>
    </location>
</feature>
<feature type="modified residue" description="Phosphoserine" evidence="2">
    <location>
        <position position="522"/>
    </location>
</feature>
<feature type="modified residue" description="Phosphoserine" evidence="10 13">
    <location>
        <position position="541"/>
    </location>
</feature>
<feature type="modified residue" description="Phosphoserine" evidence="10 12 13">
    <location>
        <position position="543"/>
    </location>
</feature>
<feature type="modified residue" description="Phosphoserine" evidence="13">
    <location>
        <position position="556"/>
    </location>
</feature>
<feature type="modified residue" description="Phosphotyrosine" evidence="2">
    <location>
        <position position="654"/>
    </location>
</feature>
<feature type="modified residue" description="Phosphoserine" evidence="13">
    <location>
        <position position="658"/>
    </location>
</feature>
<feature type="modified residue" description="Phosphoserine" evidence="13">
    <location>
        <position position="668"/>
    </location>
</feature>
<feature type="modified residue" description="Phosphoserine" evidence="2">
    <location>
        <position position="678"/>
    </location>
</feature>
<feature type="modified residue" description="Phosphoserine" evidence="2">
    <location>
        <position position="703"/>
    </location>
</feature>
<feature type="modified residue" description="Phosphoserine" evidence="2">
    <location>
        <position position="706"/>
    </location>
</feature>
<feature type="modified residue" description="Phosphothreonine" evidence="2">
    <location>
        <position position="730"/>
    </location>
</feature>
<feature type="modified residue" description="Phosphothreonine" evidence="2">
    <location>
        <position position="853"/>
    </location>
</feature>
<feature type="splice variant" id="VSP_012874" description="In isoform 2." evidence="6 7">
    <location>
        <begin position="610"/>
        <end position="663"/>
    </location>
</feature>
<feature type="sequence conflict" description="In Ref. 4; AAH68138." evidence="8" ref="4">
    <original>MTT</original>
    <variation>EPLKGREPRRARTRPGPARPGPCQVPVLCSP</variation>
    <location>
        <begin position="1"/>
        <end position="3"/>
    </location>
</feature>
<feature type="sequence conflict" description="In Ref. 1; AAA37123." evidence="8" ref="1">
    <original>A</original>
    <variation>V</variation>
    <location>
        <position position="8"/>
    </location>
</feature>
<feature type="sequence conflict" description="In Ref. 1; AAA37122." evidence="8" ref="1">
    <original>KG</original>
    <variation>NL</variation>
    <location>
        <begin position="232"/>
        <end position="233"/>
    </location>
</feature>
<feature type="sequence conflict" description="In Ref. 1; AAA37122." evidence="8" ref="1">
    <original>Y</original>
    <variation>S</variation>
    <location>
        <position position="443"/>
    </location>
</feature>
<feature type="sequence conflict" description="In Ref. 1; AAA37122." evidence="8" ref="1">
    <original>A</original>
    <variation>R</variation>
    <location>
        <position position="576"/>
    </location>
</feature>
<evidence type="ECO:0000250" key="1"/>
<evidence type="ECO:0000250" key="2">
    <source>
        <dbReference type="UniProtKB" id="P11171"/>
    </source>
</evidence>
<evidence type="ECO:0000255" key="3">
    <source>
        <dbReference type="PROSITE-ProRule" id="PRU00084"/>
    </source>
</evidence>
<evidence type="ECO:0000256" key="4">
    <source>
        <dbReference type="SAM" id="MobiDB-lite"/>
    </source>
</evidence>
<evidence type="ECO:0000269" key="5">
    <source>
    </source>
</evidence>
<evidence type="ECO:0000303" key="6">
    <source>
    </source>
</evidence>
<evidence type="ECO:0000303" key="7">
    <source ref="2"/>
</evidence>
<evidence type="ECO:0000305" key="8"/>
<evidence type="ECO:0000312" key="9">
    <source>
        <dbReference type="MGI" id="MGI:95401"/>
    </source>
</evidence>
<evidence type="ECO:0007744" key="10">
    <source>
    </source>
</evidence>
<evidence type="ECO:0007744" key="11">
    <source>
    </source>
</evidence>
<evidence type="ECO:0007744" key="12">
    <source>
    </source>
</evidence>
<evidence type="ECO:0007744" key="13">
    <source>
    </source>
</evidence>
<dbReference type="EMBL" id="L00919">
    <property type="protein sequence ID" value="AAA37122.1"/>
    <property type="molecule type" value="mRNA"/>
</dbReference>
<dbReference type="EMBL" id="L00919">
    <property type="protein sequence ID" value="AAA37123.1"/>
    <property type="molecule type" value="mRNA"/>
</dbReference>
<dbReference type="EMBL" id="AK220462">
    <property type="protein sequence ID" value="BAD90280.1"/>
    <property type="status" value="ALT_INIT"/>
    <property type="molecule type" value="mRNA"/>
</dbReference>
<dbReference type="EMBL" id="AL607088">
    <property type="status" value="NOT_ANNOTATED_CDS"/>
    <property type="molecule type" value="Genomic_DNA"/>
</dbReference>
<dbReference type="EMBL" id="AL669981">
    <property type="status" value="NOT_ANNOTATED_CDS"/>
    <property type="molecule type" value="Genomic_DNA"/>
</dbReference>
<dbReference type="EMBL" id="BC068138">
    <property type="protein sequence ID" value="AAH68138.1"/>
    <property type="molecule type" value="mRNA"/>
</dbReference>
<dbReference type="EMBL" id="BC079875">
    <property type="protein sequence ID" value="AAH79875.1"/>
    <property type="molecule type" value="mRNA"/>
</dbReference>
<dbReference type="CCDS" id="CCDS18717.1">
    <molecule id="P48193-1"/>
</dbReference>
<dbReference type="CCDS" id="CCDS51317.1">
    <molecule id="P48193-2"/>
</dbReference>
<dbReference type="PIR" id="A46613">
    <property type="entry name" value="A46613"/>
</dbReference>
<dbReference type="RefSeq" id="NP_001122078.1">
    <molecule id="P48193-2"/>
    <property type="nucleotide sequence ID" value="NM_001128606.1"/>
</dbReference>
<dbReference type="RefSeq" id="NP_001122079.1">
    <property type="nucleotide sequence ID" value="NM_001128607.1"/>
</dbReference>
<dbReference type="RefSeq" id="NP_906273.3">
    <molecule id="P48193-1"/>
    <property type="nucleotide sequence ID" value="NM_183428.3"/>
</dbReference>
<dbReference type="RefSeq" id="XP_030109446.1">
    <molecule id="P48193-1"/>
    <property type="nucleotide sequence ID" value="XM_030253586.2"/>
</dbReference>
<dbReference type="BMRB" id="P48193"/>
<dbReference type="SMR" id="P48193"/>
<dbReference type="BioGRID" id="234673">
    <property type="interactions" value="11"/>
</dbReference>
<dbReference type="FunCoup" id="P48193">
    <property type="interactions" value="2073"/>
</dbReference>
<dbReference type="STRING" id="10090.ENSMUSP00000030739"/>
<dbReference type="GlyGen" id="P48193">
    <property type="glycosylation" value="1 site, 1 O-linked glycan (1 site)"/>
</dbReference>
<dbReference type="iPTMnet" id="P48193"/>
<dbReference type="PhosphoSitePlus" id="P48193"/>
<dbReference type="jPOST" id="P48193"/>
<dbReference type="PaxDb" id="10090-ENSMUSP00000101595"/>
<dbReference type="PeptideAtlas" id="P48193"/>
<dbReference type="ProteomicsDB" id="285570">
    <molecule id="P48193-1"/>
</dbReference>
<dbReference type="ProteomicsDB" id="285571">
    <molecule id="P48193-2"/>
</dbReference>
<dbReference type="Antibodypedia" id="30998">
    <property type="antibodies" value="355 antibodies from 30 providers"/>
</dbReference>
<dbReference type="DNASU" id="269587"/>
<dbReference type="Ensembl" id="ENSMUST00000030739.11">
    <molecule id="P48193-1"/>
    <property type="protein sequence ID" value="ENSMUSP00000030739.5"/>
    <property type="gene ID" value="ENSMUSG00000028906.18"/>
</dbReference>
<dbReference type="Ensembl" id="ENSMUST00000054917.12">
    <molecule id="P48193-2"/>
    <property type="protein sequence ID" value="ENSMUSP00000060375.6"/>
    <property type="gene ID" value="ENSMUSG00000028906.18"/>
</dbReference>
<dbReference type="Ensembl" id="ENSMUST00000084253.10">
    <molecule id="P48193-2"/>
    <property type="protein sequence ID" value="ENSMUSP00000081274.4"/>
    <property type="gene ID" value="ENSMUSG00000028906.18"/>
</dbReference>
<dbReference type="Ensembl" id="ENSMUST00000105972.8">
    <molecule id="P48193-1"/>
    <property type="protein sequence ID" value="ENSMUSP00000101592.2"/>
    <property type="gene ID" value="ENSMUSG00000028906.18"/>
</dbReference>
<dbReference type="Ensembl" id="ENSMUST00000105981.9">
    <molecule id="P48193-1"/>
    <property type="protein sequence ID" value="ENSMUSP00000101601.3"/>
    <property type="gene ID" value="ENSMUSG00000028906.18"/>
</dbReference>
<dbReference type="GeneID" id="269587"/>
<dbReference type="KEGG" id="mmu:269587"/>
<dbReference type="UCSC" id="uc008val.3">
    <molecule id="P48193-2"/>
    <property type="organism name" value="mouse"/>
</dbReference>
<dbReference type="UCSC" id="uc008vam.3">
    <molecule id="P48193-1"/>
    <property type="organism name" value="mouse"/>
</dbReference>
<dbReference type="AGR" id="MGI:95401"/>
<dbReference type="CTD" id="2035"/>
<dbReference type="MGI" id="MGI:95401">
    <property type="gene designation" value="Epb41"/>
</dbReference>
<dbReference type="VEuPathDB" id="HostDB:ENSMUSG00000028906"/>
<dbReference type="eggNOG" id="KOG3527">
    <property type="taxonomic scope" value="Eukaryota"/>
</dbReference>
<dbReference type="GeneTree" id="ENSGT00940000157833"/>
<dbReference type="InParanoid" id="P48193"/>
<dbReference type="OMA" id="EHHTFFX"/>
<dbReference type="Reactome" id="R-MMU-6794361">
    <property type="pathway name" value="Neurexins and neuroligins"/>
</dbReference>
<dbReference type="BioGRID-ORCS" id="269587">
    <property type="hits" value="2 hits in 44 CRISPR screens"/>
</dbReference>
<dbReference type="ChiTaRS" id="Epb41">
    <property type="organism name" value="mouse"/>
</dbReference>
<dbReference type="PRO" id="PR:P48193"/>
<dbReference type="Proteomes" id="UP000000589">
    <property type="component" value="Chromosome 4"/>
</dbReference>
<dbReference type="RNAct" id="P48193">
    <property type="molecule type" value="protein"/>
</dbReference>
<dbReference type="Bgee" id="ENSMUSG00000028906">
    <property type="expression patterns" value="Expressed in blood and 248 other cell types or tissues"/>
</dbReference>
<dbReference type="ExpressionAtlas" id="P48193">
    <property type="expression patterns" value="baseline and differential"/>
</dbReference>
<dbReference type="GO" id="GO:0015629">
    <property type="term" value="C:actin cytoskeleton"/>
    <property type="evidence" value="ECO:0000250"/>
    <property type="project" value="MGI"/>
</dbReference>
<dbReference type="GO" id="GO:0016323">
    <property type="term" value="C:basolateral plasma membrane"/>
    <property type="evidence" value="ECO:0000314"/>
    <property type="project" value="UniProtKB"/>
</dbReference>
<dbReference type="GO" id="GO:0005938">
    <property type="term" value="C:cell cortex"/>
    <property type="evidence" value="ECO:0000250"/>
    <property type="project" value="UniProtKB"/>
</dbReference>
<dbReference type="GO" id="GO:0030863">
    <property type="term" value="C:cortical cytoskeleton"/>
    <property type="evidence" value="ECO:0000314"/>
    <property type="project" value="MGI"/>
</dbReference>
<dbReference type="GO" id="GO:0016020">
    <property type="term" value="C:membrane"/>
    <property type="evidence" value="ECO:0000314"/>
    <property type="project" value="MGI"/>
</dbReference>
<dbReference type="GO" id="GO:0005634">
    <property type="term" value="C:nucleus"/>
    <property type="evidence" value="ECO:0007669"/>
    <property type="project" value="UniProtKB-SubCell"/>
</dbReference>
<dbReference type="GO" id="GO:0003779">
    <property type="term" value="F:actin binding"/>
    <property type="evidence" value="ECO:0000250"/>
    <property type="project" value="MGI"/>
</dbReference>
<dbReference type="GO" id="GO:0005516">
    <property type="term" value="F:calmodulin binding"/>
    <property type="evidence" value="ECO:0007669"/>
    <property type="project" value="UniProtKB-KW"/>
</dbReference>
<dbReference type="GO" id="GO:0030507">
    <property type="term" value="F:spectrin binding"/>
    <property type="evidence" value="ECO:0000250"/>
    <property type="project" value="MGI"/>
</dbReference>
<dbReference type="GO" id="GO:0005198">
    <property type="term" value="F:structural molecule activity"/>
    <property type="evidence" value="ECO:0007669"/>
    <property type="project" value="InterPro"/>
</dbReference>
<dbReference type="GO" id="GO:0030036">
    <property type="term" value="P:actin cytoskeleton organization"/>
    <property type="evidence" value="ECO:0000250"/>
    <property type="project" value="MGI"/>
</dbReference>
<dbReference type="GO" id="GO:0051301">
    <property type="term" value="P:cell division"/>
    <property type="evidence" value="ECO:0007669"/>
    <property type="project" value="UniProtKB-KW"/>
</dbReference>
<dbReference type="GO" id="GO:0030866">
    <property type="term" value="P:cortical actin cytoskeleton organization"/>
    <property type="evidence" value="ECO:0007669"/>
    <property type="project" value="InterPro"/>
</dbReference>
<dbReference type="GO" id="GO:1904778">
    <property type="term" value="P:positive regulation of protein localization to cell cortex"/>
    <property type="evidence" value="ECO:0000250"/>
    <property type="project" value="UniProtKB"/>
</dbReference>
<dbReference type="GO" id="GO:0051924">
    <property type="term" value="P:regulation of calcium ion transport"/>
    <property type="evidence" value="ECO:0000315"/>
    <property type="project" value="UniProtKB"/>
</dbReference>
<dbReference type="GO" id="GO:0008360">
    <property type="term" value="P:regulation of cell shape"/>
    <property type="evidence" value="ECO:0000250"/>
    <property type="project" value="MGI"/>
</dbReference>
<dbReference type="GO" id="GO:1904478">
    <property type="term" value="P:regulation of intestinal absorption"/>
    <property type="evidence" value="ECO:0000315"/>
    <property type="project" value="UniProtKB"/>
</dbReference>
<dbReference type="CDD" id="cd14473">
    <property type="entry name" value="FERM_B-lobe"/>
    <property type="match status" value="1"/>
</dbReference>
<dbReference type="CDD" id="cd13184">
    <property type="entry name" value="FERM_C_4_1_family"/>
    <property type="match status" value="1"/>
</dbReference>
<dbReference type="CDD" id="cd17105">
    <property type="entry name" value="FERM_F1_EPB41"/>
    <property type="match status" value="1"/>
</dbReference>
<dbReference type="FunFam" id="1.20.80.10:FF:000001">
    <property type="entry name" value="Erythrocyte membrane protein band 4.1"/>
    <property type="match status" value="1"/>
</dbReference>
<dbReference type="FunFam" id="2.30.29.30:FF:000001">
    <property type="entry name" value="Erythrocyte membrane protein band 4.1"/>
    <property type="match status" value="1"/>
</dbReference>
<dbReference type="FunFam" id="3.10.20.90:FF:000002">
    <property type="entry name" value="Erythrocyte protein band 4.1-like 3"/>
    <property type="match status" value="1"/>
</dbReference>
<dbReference type="Gene3D" id="1.20.80.10">
    <property type="match status" value="1"/>
</dbReference>
<dbReference type="Gene3D" id="3.10.20.90">
    <property type="entry name" value="Phosphatidylinositol 3-kinase Catalytic Subunit, Chain A, domain 1"/>
    <property type="match status" value="1"/>
</dbReference>
<dbReference type="Gene3D" id="2.30.29.30">
    <property type="entry name" value="Pleckstrin-homology domain (PH domain)/Phosphotyrosine-binding domain (PTB)"/>
    <property type="match status" value="1"/>
</dbReference>
<dbReference type="InterPro" id="IPR008379">
    <property type="entry name" value="Band_4.1_C"/>
</dbReference>
<dbReference type="InterPro" id="IPR019749">
    <property type="entry name" value="Band_41_domain"/>
</dbReference>
<dbReference type="InterPro" id="IPR021187">
    <property type="entry name" value="EPB4.1_FERM_F1"/>
</dbReference>
<dbReference type="InterPro" id="IPR000798">
    <property type="entry name" value="Ez/rad/moesin-like"/>
</dbReference>
<dbReference type="InterPro" id="IPR014847">
    <property type="entry name" value="FA"/>
</dbReference>
<dbReference type="InterPro" id="IPR014352">
    <property type="entry name" value="FERM/acyl-CoA-bd_prot_sf"/>
</dbReference>
<dbReference type="InterPro" id="IPR035963">
    <property type="entry name" value="FERM_2"/>
</dbReference>
<dbReference type="InterPro" id="IPR019748">
    <property type="entry name" value="FERM_central"/>
</dbReference>
<dbReference type="InterPro" id="IPR019747">
    <property type="entry name" value="FERM_CS"/>
</dbReference>
<dbReference type="InterPro" id="IPR000299">
    <property type="entry name" value="FERM_domain"/>
</dbReference>
<dbReference type="InterPro" id="IPR018979">
    <property type="entry name" value="FERM_N"/>
</dbReference>
<dbReference type="InterPro" id="IPR018980">
    <property type="entry name" value="FERM_PH-like_C"/>
</dbReference>
<dbReference type="InterPro" id="IPR011993">
    <property type="entry name" value="PH-like_dom_sf"/>
</dbReference>
<dbReference type="InterPro" id="IPR007477">
    <property type="entry name" value="SAB_dom"/>
</dbReference>
<dbReference type="InterPro" id="IPR029071">
    <property type="entry name" value="Ubiquitin-like_domsf"/>
</dbReference>
<dbReference type="PANTHER" id="PTHR23280">
    <property type="entry name" value="4.1 G PROTEIN"/>
    <property type="match status" value="1"/>
</dbReference>
<dbReference type="PANTHER" id="PTHR23280:SF12">
    <property type="entry name" value="PROTEIN 4.1"/>
    <property type="match status" value="1"/>
</dbReference>
<dbReference type="Pfam" id="PF05902">
    <property type="entry name" value="4_1_CTD"/>
    <property type="match status" value="1"/>
</dbReference>
<dbReference type="Pfam" id="PF08736">
    <property type="entry name" value="FA"/>
    <property type="match status" value="1"/>
</dbReference>
<dbReference type="Pfam" id="PF09380">
    <property type="entry name" value="FERM_C"/>
    <property type="match status" value="1"/>
</dbReference>
<dbReference type="Pfam" id="PF00373">
    <property type="entry name" value="FERM_M"/>
    <property type="match status" value="1"/>
</dbReference>
<dbReference type="Pfam" id="PF09379">
    <property type="entry name" value="FERM_N"/>
    <property type="match status" value="1"/>
</dbReference>
<dbReference type="Pfam" id="PF04382">
    <property type="entry name" value="SAB"/>
    <property type="match status" value="1"/>
</dbReference>
<dbReference type="PIRSF" id="PIRSF002304">
    <property type="entry name" value="Membrane_skeletal_4_1"/>
    <property type="match status" value="1"/>
</dbReference>
<dbReference type="PRINTS" id="PR00935">
    <property type="entry name" value="BAND41"/>
</dbReference>
<dbReference type="PRINTS" id="PR00661">
    <property type="entry name" value="ERMFAMILY"/>
</dbReference>
<dbReference type="SMART" id="SM00295">
    <property type="entry name" value="B41"/>
    <property type="match status" value="1"/>
</dbReference>
<dbReference type="SMART" id="SM01195">
    <property type="entry name" value="FA"/>
    <property type="match status" value="1"/>
</dbReference>
<dbReference type="SMART" id="SM01196">
    <property type="entry name" value="FERM_C"/>
    <property type="match status" value="1"/>
</dbReference>
<dbReference type="SUPFAM" id="SSF50729">
    <property type="entry name" value="PH domain-like"/>
    <property type="match status" value="1"/>
</dbReference>
<dbReference type="SUPFAM" id="SSF47031">
    <property type="entry name" value="Second domain of FERM"/>
    <property type="match status" value="1"/>
</dbReference>
<dbReference type="SUPFAM" id="SSF54236">
    <property type="entry name" value="Ubiquitin-like"/>
    <property type="match status" value="1"/>
</dbReference>
<dbReference type="PROSITE" id="PS00660">
    <property type="entry name" value="FERM_1"/>
    <property type="match status" value="1"/>
</dbReference>
<dbReference type="PROSITE" id="PS00661">
    <property type="entry name" value="FERM_2"/>
    <property type="match status" value="1"/>
</dbReference>
<dbReference type="PROSITE" id="PS50057">
    <property type="entry name" value="FERM_3"/>
    <property type="match status" value="1"/>
</dbReference>